<name>ASG1_YEAST</name>
<keyword id="KW-0238">DNA-binding</keyword>
<keyword id="KW-0479">Metal-binding</keyword>
<keyword id="KW-0539">Nucleus</keyword>
<keyword id="KW-0597">Phosphoprotein</keyword>
<keyword id="KW-1185">Reference proteome</keyword>
<keyword id="KW-0346">Stress response</keyword>
<keyword id="KW-0804">Transcription</keyword>
<keyword id="KW-0805">Transcription regulation</keyword>
<keyword id="KW-0862">Zinc</keyword>
<sequence length="964" mass="108781">MPEQAQQGEQSVKRRRVTRACDECRKKKVKCDGQQPCIHCTVYSYECTYKKPTKRTQNSGNSGVLTLGNVTTGPSSSTVVAAAASNPNKLLSNIKTERAILPGASTIPASNNPSKPRKYKTKSTRLQSKIDRYKQIFDEVFPQLPDIDNLDIPVFLQIFHNFKRDSQSFLDDTVKEYTLIVNDSSSPIQPVLSSNSKNSTPDEFLPNMKSDSNSASSNREQDSVDTYSNIPVGREIKIILPPKAIALQFVKSTWEHCCVLLRFYHRPSFIRQLDELYETDPNNYTSKQMQFLPLCYAAIAVGALFSKSIVSNDSSREKFLQDEGYKYFIAARKLIDITNARDLNSIQAILMLIIFLQCSARLSTCYTYIGVAMRSALRAGFHRKLSPNSGFSPIEIEMRKRLFYTIYKLDVYINAMLGLPRSISPDDFDQTLPLDLSDENITEVAYLPENQHSVLSSTGISNEHTKLFLILNEIISELYPIKKTSNIISHETVTSLELKLRNWLDSLPKELIPNAENIDPEYERANRLLHLSFLHVQIILYRPFIHYLSRNMNAENVDPLCYRRARNSIAVARTVIKLAKEMVSNNLLTGSYWYACYTIFYSVAGLLFYIHEAQLPDKDSAREYYDILKDAETGRSVLIQLKDSSMAASRTYNLLNQIFEKLNSKTIQLTALHSSPSNESAFLVTNNSSALKPHLGDSLQPPVFFSSQDTKNSFSLAKSEESTNDYAMANYLNNTPISENPLNEAQQQDQVSQGTTNMSNERDPNNFLSIDIRLDNNGQSNILDATDDVFIRNDGDIPTNSAFDFSSSKSNASNNSNPDTINNNYNNVSGKNNNNNNITNNSNNNHNNNNNDNNNNNNNNNNNNNNNNNSGNSSNNNNNNNNNKNNNDFGIKIDNNSPSYEGFPQLQIPLSQDNLNIEDKEEMSPNIEIKNEQNMTDSNDILGVFDQLDAQLFGKYLPLNYPSE</sequence>
<protein>
    <recommendedName>
        <fullName>Activator of stress genes 1</fullName>
    </recommendedName>
</protein>
<feature type="chain" id="PRO_0000114997" description="Activator of stress genes 1">
    <location>
        <begin position="1"/>
        <end position="964"/>
    </location>
</feature>
<feature type="DNA-binding region" description="Zn(2)-C6 fungal-type" evidence="1">
    <location>
        <begin position="21"/>
        <end position="47"/>
    </location>
</feature>
<feature type="region of interest" description="Disordered" evidence="2">
    <location>
        <begin position="104"/>
        <end position="125"/>
    </location>
</feature>
<feature type="region of interest" description="Disordered" evidence="2">
    <location>
        <begin position="190"/>
        <end position="225"/>
    </location>
</feature>
<feature type="region of interest" description="Disordered" evidence="2">
    <location>
        <begin position="733"/>
        <end position="764"/>
    </location>
</feature>
<feature type="region of interest" description="Disordered" evidence="2">
    <location>
        <begin position="800"/>
        <end position="900"/>
    </location>
</feature>
<feature type="compositionally biased region" description="Polar residues" evidence="2">
    <location>
        <begin position="190"/>
        <end position="201"/>
    </location>
</feature>
<feature type="compositionally biased region" description="Polar residues" evidence="2">
    <location>
        <begin position="209"/>
        <end position="225"/>
    </location>
</feature>
<feature type="compositionally biased region" description="Polar residues" evidence="2">
    <location>
        <begin position="733"/>
        <end position="759"/>
    </location>
</feature>
<feature type="compositionally biased region" description="Low complexity" evidence="2">
    <location>
        <begin position="800"/>
        <end position="896"/>
    </location>
</feature>
<feature type="modified residue" description="Phosphoserine; by ATM or ATR" evidence="9">
    <location>
        <position position="166"/>
    </location>
</feature>
<feature type="modified residue" description="Phosphoserine" evidence="10">
    <location>
        <position position="186"/>
    </location>
</feature>
<feature type="modified residue" description="Phosphoserine" evidence="8 9 10">
    <location>
        <position position="963"/>
    </location>
</feature>
<feature type="sequence variant" description="In strain: SK1." evidence="6">
    <original>S</original>
    <variation>N</variation>
    <location>
        <position position="77"/>
    </location>
</feature>
<feature type="sequence variant" description="In strain: SK1." evidence="6">
    <original>N</original>
    <variation>S</variation>
    <location>
        <position position="149"/>
    </location>
</feature>
<feature type="sequence variant" description="In strain: SK1." evidence="6">
    <original>I</original>
    <variation>F</variation>
    <location>
        <position position="353"/>
    </location>
</feature>
<feature type="sequence variant" description="In strain: SK1." evidence="6">
    <original>F</original>
    <variation>S</variation>
    <location>
        <position position="682"/>
    </location>
</feature>
<feature type="sequence variant" description="In strain: SK1." evidence="6">
    <original>S</original>
    <variation>F</variation>
    <location>
        <position position="707"/>
    </location>
</feature>
<feature type="sequence variant" description="In strain: SK1." evidence="6">
    <original>I</original>
    <variation>T</variation>
    <location>
        <position position="770"/>
    </location>
</feature>
<feature type="sequence variant" description="In strain: SK1." evidence="6">
    <original>N</original>
    <variation>S</variation>
    <location>
        <position position="811"/>
    </location>
</feature>
<feature type="sequence variant" description="In strain: SK1.">
    <original>D</original>
    <variation>NDNNN</variation>
    <location>
        <position position="852"/>
    </location>
</feature>
<feature type="sequence variant" description="In strain: SK1." evidence="6">
    <original>N</original>
    <variation>NN</variation>
    <location>
        <position position="887"/>
    </location>
</feature>
<feature type="sequence variant" description="In strain: SK1." evidence="6">
    <location>
        <begin position="926"/>
        <end position="933"/>
    </location>
</feature>
<reference key="1">
    <citation type="journal article" date="2005" name="Nat. Genet.">
        <title>Quantitative trait loci mapped to single-nucleotide resolution in yeast.</title>
        <authorList>
            <person name="Deutschbauer A.M."/>
            <person name="Davis R.W."/>
        </authorList>
    </citation>
    <scope>NUCLEOTIDE SEQUENCE [GENOMIC DNA]</scope>
    <scope>VARIANTS ASN-77; SER-149; PHE-353; SER-682; PHE-707; THR-770; SER-811; ASN-ASP-ASN-ASN-ASN-852 INS; ASN-887 INS AND 926-ASN--GLN-933 DEL</scope>
    <source>
        <strain>SK1</strain>
    </source>
</reference>
<reference key="2">
    <citation type="journal article" date="1997" name="Nature">
        <title>The nucleotide sequence of Saccharomyces cerevisiae chromosome IX.</title>
        <authorList>
            <person name="Churcher C.M."/>
            <person name="Bowman S."/>
            <person name="Badcock K."/>
            <person name="Bankier A.T."/>
            <person name="Brown D."/>
            <person name="Chillingworth T."/>
            <person name="Connor R."/>
            <person name="Devlin K."/>
            <person name="Gentles S."/>
            <person name="Hamlin N."/>
            <person name="Harris D.E."/>
            <person name="Horsnell T."/>
            <person name="Hunt S."/>
            <person name="Jagels K."/>
            <person name="Jones M."/>
            <person name="Lye G."/>
            <person name="Moule S."/>
            <person name="Odell C."/>
            <person name="Pearson D."/>
            <person name="Rajandream M.A."/>
            <person name="Rice P."/>
            <person name="Rowley N."/>
            <person name="Skelton J."/>
            <person name="Smith V."/>
            <person name="Walsh S.V."/>
            <person name="Whitehead S."/>
            <person name="Barrell B.G."/>
        </authorList>
    </citation>
    <scope>NUCLEOTIDE SEQUENCE [LARGE SCALE GENOMIC DNA]</scope>
    <source>
        <strain>ATCC 204508 / S288c</strain>
    </source>
</reference>
<reference key="3">
    <citation type="journal article" date="2014" name="G3 (Bethesda)">
        <title>The reference genome sequence of Saccharomyces cerevisiae: Then and now.</title>
        <authorList>
            <person name="Engel S.R."/>
            <person name="Dietrich F.S."/>
            <person name="Fisk D.G."/>
            <person name="Binkley G."/>
            <person name="Balakrishnan R."/>
            <person name="Costanzo M.C."/>
            <person name="Dwight S.S."/>
            <person name="Hitz B.C."/>
            <person name="Karra K."/>
            <person name="Nash R.S."/>
            <person name="Weng S."/>
            <person name="Wong E.D."/>
            <person name="Lloyd P."/>
            <person name="Skrzypek M.S."/>
            <person name="Miyasato S.R."/>
            <person name="Simison M."/>
            <person name="Cherry J.M."/>
        </authorList>
    </citation>
    <scope>GENOME REANNOTATION</scope>
    <source>
        <strain>ATCC 204508 / S288c</strain>
    </source>
</reference>
<reference key="4">
    <citation type="journal article" date="2001" name="Nucleic Acids Res.">
        <title>Phenotypic analysis of genes encoding yeast zinc cluster proteins.</title>
        <authorList>
            <person name="Akache B."/>
            <person name="Wu K."/>
            <person name="Turcotte B."/>
        </authorList>
    </citation>
    <scope>DISRUPTION PHENOTYPE</scope>
    <scope>FUNCTION</scope>
</reference>
<reference key="5">
    <citation type="journal article" date="2003" name="Nature">
        <title>Global analysis of protein localization in budding yeast.</title>
        <authorList>
            <person name="Huh W.-K."/>
            <person name="Falvo J.V."/>
            <person name="Gerke L.C."/>
            <person name="Carroll A.S."/>
            <person name="Howson R.W."/>
            <person name="Weissman J.S."/>
            <person name="O'Shea E.K."/>
        </authorList>
    </citation>
    <scope>SUBCELLULAR LOCATION [LARGE SCALE ANALYSIS]</scope>
</reference>
<reference key="6">
    <citation type="journal article" date="2003" name="Nature">
        <title>Global analysis of protein expression in yeast.</title>
        <authorList>
            <person name="Ghaemmaghami S."/>
            <person name="Huh W.-K."/>
            <person name="Bower K."/>
            <person name="Howson R.W."/>
            <person name="Belle A."/>
            <person name="Dephoure N."/>
            <person name="O'Shea E.K."/>
            <person name="Weissman J.S."/>
        </authorList>
    </citation>
    <scope>LEVEL OF PROTEIN EXPRESSION [LARGE SCALE ANALYSIS]</scope>
</reference>
<reference key="7">
    <citation type="journal article" date="2007" name="J. Proteome Res.">
        <title>Large-scale phosphorylation analysis of alpha-factor-arrested Saccharomyces cerevisiae.</title>
        <authorList>
            <person name="Li X."/>
            <person name="Gerber S.A."/>
            <person name="Rudner A.D."/>
            <person name="Beausoleil S.A."/>
            <person name="Haas W."/>
            <person name="Villen J."/>
            <person name="Elias J.E."/>
            <person name="Gygi S.P."/>
        </authorList>
    </citation>
    <scope>PHOSPHORYLATION [LARGE SCALE ANALYSIS] AT SER-963</scope>
    <scope>IDENTIFICATION BY MASS SPECTROMETRY [LARGE SCALE ANALYSIS]</scope>
    <source>
        <strain>ADR376</strain>
    </source>
</reference>
<reference key="8">
    <citation type="journal article" date="2008" name="Mol. Cell. Proteomics">
        <title>A multidimensional chromatography technology for in-depth phosphoproteome analysis.</title>
        <authorList>
            <person name="Albuquerque C.P."/>
            <person name="Smolka M.B."/>
            <person name="Payne S.H."/>
            <person name="Bafna V."/>
            <person name="Eng J."/>
            <person name="Zhou H."/>
        </authorList>
    </citation>
    <scope>PHOSPHORYLATION [LARGE SCALE ANALYSIS] AT SER-166 AND SER-963</scope>
    <scope>IDENTIFICATION BY MASS SPECTROMETRY [LARGE SCALE ANALYSIS]</scope>
</reference>
<reference key="9">
    <citation type="journal article" date="2009" name="Science">
        <title>Global analysis of Cdk1 substrate phosphorylation sites provides insights into evolution.</title>
        <authorList>
            <person name="Holt L.J."/>
            <person name="Tuch B.B."/>
            <person name="Villen J."/>
            <person name="Johnson A.D."/>
            <person name="Gygi S.P."/>
            <person name="Morgan D.O."/>
        </authorList>
    </citation>
    <scope>PHOSPHORYLATION [LARGE SCALE ANALYSIS] AT SER-186 AND SER-963</scope>
    <scope>IDENTIFICATION BY MASS SPECTROMETRY [LARGE SCALE ANALYSIS]</scope>
</reference>
<reference key="10">
    <citation type="journal article" date="2012" name="Proc. Natl. Acad. Sci. U.S.A.">
        <title>N-terminal acetylome analyses and functional insights of the N-terminal acetyltransferase NatB.</title>
        <authorList>
            <person name="Van Damme P."/>
            <person name="Lasa M."/>
            <person name="Polevoda B."/>
            <person name="Gazquez C."/>
            <person name="Elosegui-Artola A."/>
            <person name="Kim D.S."/>
            <person name="De Juan-Pardo E."/>
            <person name="Demeyer K."/>
            <person name="Hole K."/>
            <person name="Larrea E."/>
            <person name="Timmerman E."/>
            <person name="Prieto J."/>
            <person name="Arnesen T."/>
            <person name="Sherman F."/>
            <person name="Gevaert K."/>
            <person name="Aldabe R."/>
        </authorList>
    </citation>
    <scope>IDENTIFICATION BY MASS SPECTROMETRY [LARGE SCALE ANALYSIS]</scope>
</reference>
<dbReference type="EMBL" id="DQ115392">
    <property type="protein sequence ID" value="AAZ22497.1"/>
    <property type="molecule type" value="Genomic_DNA"/>
</dbReference>
<dbReference type="EMBL" id="Z38059">
    <property type="protein sequence ID" value="CAA86148.1"/>
    <property type="molecule type" value="Genomic_DNA"/>
</dbReference>
<dbReference type="EMBL" id="BK006942">
    <property type="protein sequence ID" value="DAA08423.1"/>
    <property type="molecule type" value="Genomic_DNA"/>
</dbReference>
<dbReference type="PIR" id="S48404">
    <property type="entry name" value="S48404"/>
</dbReference>
<dbReference type="RefSeq" id="NP_012136.1">
    <property type="nucleotide sequence ID" value="NM_001179478.1"/>
</dbReference>
<dbReference type="SMR" id="P40467"/>
<dbReference type="BioGRID" id="34861">
    <property type="interactions" value="72"/>
</dbReference>
<dbReference type="DIP" id="DIP-820N"/>
<dbReference type="FunCoup" id="P40467">
    <property type="interactions" value="426"/>
</dbReference>
<dbReference type="IntAct" id="P40467">
    <property type="interactions" value="4"/>
</dbReference>
<dbReference type="MINT" id="P40467"/>
<dbReference type="STRING" id="4932.YIL130W"/>
<dbReference type="GlyGen" id="P40467">
    <property type="glycosylation" value="1 site"/>
</dbReference>
<dbReference type="iPTMnet" id="P40467"/>
<dbReference type="PaxDb" id="4932-YIL130W"/>
<dbReference type="PeptideAtlas" id="P40467"/>
<dbReference type="TopDownProteomics" id="P40467"/>
<dbReference type="EnsemblFungi" id="YIL130W_mRNA">
    <property type="protein sequence ID" value="YIL130W"/>
    <property type="gene ID" value="YIL130W"/>
</dbReference>
<dbReference type="GeneID" id="854676"/>
<dbReference type="KEGG" id="sce:YIL130W"/>
<dbReference type="AGR" id="SGD:S000001392"/>
<dbReference type="SGD" id="S000001392">
    <property type="gene designation" value="ASG1"/>
</dbReference>
<dbReference type="VEuPathDB" id="FungiDB:YIL130W"/>
<dbReference type="eggNOG" id="ENOG502QSY2">
    <property type="taxonomic scope" value="Eukaryota"/>
</dbReference>
<dbReference type="GeneTree" id="ENSGT00940000176737"/>
<dbReference type="HOGENOM" id="CLU_010084_1_0_1"/>
<dbReference type="InParanoid" id="P40467"/>
<dbReference type="OMA" id="DQGFQYF"/>
<dbReference type="OrthoDB" id="422427at2759"/>
<dbReference type="BioCyc" id="YEAST:G3O-31381-MONOMER"/>
<dbReference type="BioGRID-ORCS" id="854676">
    <property type="hits" value="0 hits in 13 CRISPR screens"/>
</dbReference>
<dbReference type="PRO" id="PR:P40467"/>
<dbReference type="Proteomes" id="UP000002311">
    <property type="component" value="Chromosome IX"/>
</dbReference>
<dbReference type="RNAct" id="P40467">
    <property type="molecule type" value="protein"/>
</dbReference>
<dbReference type="GO" id="GO:0005634">
    <property type="term" value="C:nucleus"/>
    <property type="evidence" value="ECO:0007005"/>
    <property type="project" value="SGD"/>
</dbReference>
<dbReference type="GO" id="GO:0000981">
    <property type="term" value="F:DNA-binding transcription factor activity, RNA polymerase II-specific"/>
    <property type="evidence" value="ECO:0007669"/>
    <property type="project" value="InterPro"/>
</dbReference>
<dbReference type="GO" id="GO:0043565">
    <property type="term" value="F:sequence-specific DNA binding"/>
    <property type="evidence" value="ECO:0007005"/>
    <property type="project" value="SGD"/>
</dbReference>
<dbReference type="GO" id="GO:0008270">
    <property type="term" value="F:zinc ion binding"/>
    <property type="evidence" value="ECO:0007669"/>
    <property type="project" value="InterPro"/>
</dbReference>
<dbReference type="GO" id="GO:0006351">
    <property type="term" value="P:DNA-templated transcription"/>
    <property type="evidence" value="ECO:0007669"/>
    <property type="project" value="InterPro"/>
</dbReference>
<dbReference type="GO" id="GO:0045944">
    <property type="term" value="P:positive regulation of transcription by RNA polymerase II"/>
    <property type="evidence" value="ECO:0000318"/>
    <property type="project" value="GO_Central"/>
</dbReference>
<dbReference type="CDD" id="cd12148">
    <property type="entry name" value="fungal_TF_MHR"/>
    <property type="match status" value="1"/>
</dbReference>
<dbReference type="CDD" id="cd00067">
    <property type="entry name" value="GAL4"/>
    <property type="match status" value="1"/>
</dbReference>
<dbReference type="Gene3D" id="4.10.240.10">
    <property type="entry name" value="Zn(2)-C6 fungal-type DNA-binding domain"/>
    <property type="match status" value="1"/>
</dbReference>
<dbReference type="InterPro" id="IPR051711">
    <property type="entry name" value="Stress_Response_Reg"/>
</dbReference>
<dbReference type="InterPro" id="IPR007219">
    <property type="entry name" value="Transcription_factor_dom_fun"/>
</dbReference>
<dbReference type="InterPro" id="IPR036864">
    <property type="entry name" value="Zn2-C6_fun-type_DNA-bd_sf"/>
</dbReference>
<dbReference type="InterPro" id="IPR001138">
    <property type="entry name" value="Zn2Cys6_DnaBD"/>
</dbReference>
<dbReference type="PANTHER" id="PTHR47540:SF1">
    <property type="entry name" value="ACTIVATOR OF STRESS GENES 1-RELATED"/>
    <property type="match status" value="1"/>
</dbReference>
<dbReference type="PANTHER" id="PTHR47540">
    <property type="entry name" value="THIAMINE REPRESSIBLE GENES REGULATORY PROTEIN THI5"/>
    <property type="match status" value="1"/>
</dbReference>
<dbReference type="Pfam" id="PF04082">
    <property type="entry name" value="Fungal_trans"/>
    <property type="match status" value="1"/>
</dbReference>
<dbReference type="Pfam" id="PF00172">
    <property type="entry name" value="Zn_clus"/>
    <property type="match status" value="1"/>
</dbReference>
<dbReference type="SMART" id="SM00906">
    <property type="entry name" value="Fungal_trans"/>
    <property type="match status" value="1"/>
</dbReference>
<dbReference type="SMART" id="SM00066">
    <property type="entry name" value="GAL4"/>
    <property type="match status" value="1"/>
</dbReference>
<dbReference type="SUPFAM" id="SSF57701">
    <property type="entry name" value="Zn2/Cys6 DNA-binding domain"/>
    <property type="match status" value="1"/>
</dbReference>
<dbReference type="PROSITE" id="PS00463">
    <property type="entry name" value="ZN2_CY6_FUNGAL_1"/>
    <property type="match status" value="1"/>
</dbReference>
<dbReference type="PROSITE" id="PS50048">
    <property type="entry name" value="ZN2_CY6_FUNGAL_2"/>
    <property type="match status" value="1"/>
</dbReference>
<comment type="function">
    <text evidence="3">Probable transcription factor involved in the stress response.</text>
</comment>
<comment type="subcellular location">
    <subcellularLocation>
        <location evidence="1 4">Nucleus</location>
    </subcellularLocation>
</comment>
<comment type="disruption phenotype">
    <text evidence="3">No growth on non-fermentable carbon sources like glycerol and lactate and sensitivity to calcofluor white.</text>
</comment>
<comment type="miscellaneous">
    <text evidence="5">Present with 396 molecules/cell in log phase SD medium.</text>
</comment>
<comment type="similarity">
    <text evidence="7">Belongs to the ASG1 family.</text>
</comment>
<gene>
    <name type="primary">ASG1</name>
    <name type="ordered locus">YIL130W</name>
</gene>
<proteinExistence type="evidence at protein level"/>
<organism>
    <name type="scientific">Saccharomyces cerevisiae (strain ATCC 204508 / S288c)</name>
    <name type="common">Baker's yeast</name>
    <dbReference type="NCBI Taxonomy" id="559292"/>
    <lineage>
        <taxon>Eukaryota</taxon>
        <taxon>Fungi</taxon>
        <taxon>Dikarya</taxon>
        <taxon>Ascomycota</taxon>
        <taxon>Saccharomycotina</taxon>
        <taxon>Saccharomycetes</taxon>
        <taxon>Saccharomycetales</taxon>
        <taxon>Saccharomycetaceae</taxon>
        <taxon>Saccharomyces</taxon>
    </lineage>
</organism>
<evidence type="ECO:0000255" key="1">
    <source>
        <dbReference type="PROSITE-ProRule" id="PRU00227"/>
    </source>
</evidence>
<evidence type="ECO:0000256" key="2">
    <source>
        <dbReference type="SAM" id="MobiDB-lite"/>
    </source>
</evidence>
<evidence type="ECO:0000269" key="3">
    <source>
    </source>
</evidence>
<evidence type="ECO:0000269" key="4">
    <source>
    </source>
</evidence>
<evidence type="ECO:0000269" key="5">
    <source>
    </source>
</evidence>
<evidence type="ECO:0000269" key="6">
    <source>
    </source>
</evidence>
<evidence type="ECO:0000305" key="7"/>
<evidence type="ECO:0007744" key="8">
    <source>
    </source>
</evidence>
<evidence type="ECO:0007744" key="9">
    <source>
    </source>
</evidence>
<evidence type="ECO:0007744" key="10">
    <source>
    </source>
</evidence>
<accession>P40467</accession>
<accession>D6VVF7</accession>
<accession>Q45U13</accession>